<accession>P02534</accession>
<accession>P02536</accession>
<reference key="1">
    <citation type="journal article" date="1986" name="Biochem. J.">
        <title>The primary structure of component 8c-1, a subunit protein of intermediate filaments in wool keratin. Relationships with proteins from other intermediate filaments.</title>
        <authorList>
            <person name="Dowling L.M."/>
            <person name="Crewther W.G."/>
            <person name="Inglis A.S."/>
        </authorList>
    </citation>
    <scope>PROTEIN SEQUENCE</scope>
    <scope>ACETYLATION AT SER-1</scope>
</reference>
<reference key="2">
    <citation type="journal article" date="1988" name="Gene">
        <title>Complete sequence of a type-I microfibrillar wool keratin gene.</title>
        <authorList>
            <person name="Wilson B.W."/>
            <person name="Edwards K.J."/>
            <person name="Sleigh M.J."/>
            <person name="Byrne C.R."/>
            <person name="Ward K.A."/>
        </authorList>
    </citation>
    <scope>NUCLEOTIDE SEQUENCE [MRNA] OF 133-412</scope>
</reference>
<reference key="3">
    <citation type="journal article" date="1983" name="Biosci. Rep.">
        <title>Structural homology between hard alpha-keratin and the intermediate filament proteins desmin and vimentin.</title>
        <authorList>
            <person name="Dowling L.M."/>
            <person name="Parry D.A.D."/>
            <person name="Sparrow L.G."/>
        </authorList>
    </citation>
    <scope>PROTEIN SEQUENCE OF 220-366</scope>
</reference>
<name>K1M1_SHEEP</name>
<protein>
    <recommendedName>
        <fullName>Keratin, type I microfibrillar 48 kDa, component 8C-1</fullName>
    </recommendedName>
    <alternativeName>
        <fullName>Low-sulfur keratin</fullName>
    </alternativeName>
</protein>
<sequence>SFNFCLPNLSFRSSCSSRPCVPSSCCGTTLPGACNIPANVGSCNWFCEGSFDGNEKETMQFLNDRLASYLEKVRQLERENAELESRILERSQQQEPLVCPNYQSYFRTIEELQQKILCAKSENARLVVQIDNAKLAADDFRTKYETELGLRQLVESDINGLRRILDELTLCKSDLEAQVESLKEELICLKSNHEEEVNTLRSQLGDRLNVEVDAAPTVDLNRVLNETRAQYEALVETNRRDVEEWYIRQTEELNKQVVSSSEQLQSCQTEIIELRRTVNALEVELQAQHNLRDSLENTLTETEARYSCQLNQVQSLISNVESQLAEIRGDLERQNQEYQVLLDVRARLECEINTYRGLLDSEDCKLPCNPCATTNACGKTITPCISSPCAPAAPCTPCVPRSRCGPCNSYVR</sequence>
<dbReference type="EMBL" id="M23913">
    <property type="protein sequence ID" value="AAA31556.1"/>
    <property type="molecule type" value="mRNA"/>
</dbReference>
<dbReference type="PIR" id="A02942">
    <property type="entry name" value="KRSHL1"/>
</dbReference>
<dbReference type="PIR" id="S07158">
    <property type="entry name" value="S07158"/>
</dbReference>
<dbReference type="SMR" id="P02534"/>
<dbReference type="iPTMnet" id="P02534"/>
<dbReference type="eggNOG" id="ENOG502SNBF">
    <property type="taxonomic scope" value="Eukaryota"/>
</dbReference>
<dbReference type="Proteomes" id="UP000002356">
    <property type="component" value="Unplaced"/>
</dbReference>
<dbReference type="GO" id="GO:0005882">
    <property type="term" value="C:intermediate filament"/>
    <property type="evidence" value="ECO:0007669"/>
    <property type="project" value="UniProtKB-KW"/>
</dbReference>
<dbReference type="GO" id="GO:0005198">
    <property type="term" value="F:structural molecule activity"/>
    <property type="evidence" value="ECO:0007669"/>
    <property type="project" value="InterPro"/>
</dbReference>
<dbReference type="GO" id="GO:0030855">
    <property type="term" value="P:epithelial cell differentiation"/>
    <property type="evidence" value="ECO:0007669"/>
    <property type="project" value="TreeGrafter"/>
</dbReference>
<dbReference type="GO" id="GO:0045109">
    <property type="term" value="P:intermediate filament organization"/>
    <property type="evidence" value="ECO:0007669"/>
    <property type="project" value="TreeGrafter"/>
</dbReference>
<dbReference type="FunFam" id="1.20.5.1160:FF:000002">
    <property type="entry name" value="Type I keratin 10"/>
    <property type="match status" value="1"/>
</dbReference>
<dbReference type="FunFam" id="1.20.5.170:FF:000002">
    <property type="entry name" value="Type I keratin KA11"/>
    <property type="match status" value="1"/>
</dbReference>
<dbReference type="FunFam" id="1.20.5.500:FF:000001">
    <property type="entry name" value="Type II keratin 23"/>
    <property type="match status" value="1"/>
</dbReference>
<dbReference type="Gene3D" id="1.20.5.170">
    <property type="match status" value="1"/>
</dbReference>
<dbReference type="Gene3D" id="1.20.5.500">
    <property type="entry name" value="Single helix bin"/>
    <property type="match status" value="1"/>
</dbReference>
<dbReference type="Gene3D" id="1.20.5.1160">
    <property type="entry name" value="Vasodilator-stimulated phosphoprotein"/>
    <property type="match status" value="1"/>
</dbReference>
<dbReference type="InterPro" id="IPR018039">
    <property type="entry name" value="IF_conserved"/>
</dbReference>
<dbReference type="InterPro" id="IPR039008">
    <property type="entry name" value="IF_rod_dom"/>
</dbReference>
<dbReference type="InterPro" id="IPR002957">
    <property type="entry name" value="Keratin_I"/>
</dbReference>
<dbReference type="PANTHER" id="PTHR23239">
    <property type="entry name" value="INTERMEDIATE FILAMENT"/>
    <property type="match status" value="1"/>
</dbReference>
<dbReference type="PANTHER" id="PTHR23239:SF97">
    <property type="entry name" value="KERATIN, TYPE I CUTICULAR HA1"/>
    <property type="match status" value="1"/>
</dbReference>
<dbReference type="Pfam" id="PF00038">
    <property type="entry name" value="Filament"/>
    <property type="match status" value="1"/>
</dbReference>
<dbReference type="PRINTS" id="PR01248">
    <property type="entry name" value="TYPE1KERATIN"/>
</dbReference>
<dbReference type="SMART" id="SM01391">
    <property type="entry name" value="Filament"/>
    <property type="match status" value="1"/>
</dbReference>
<dbReference type="SUPFAM" id="SSF64593">
    <property type="entry name" value="Intermediate filament protein, coiled coil region"/>
    <property type="match status" value="2"/>
</dbReference>
<dbReference type="PROSITE" id="PS00226">
    <property type="entry name" value="IF_ROD_1"/>
    <property type="match status" value="1"/>
</dbReference>
<dbReference type="PROSITE" id="PS51842">
    <property type="entry name" value="IF_ROD_2"/>
    <property type="match status" value="1"/>
</dbReference>
<evidence type="ECO:0000255" key="1">
    <source>
        <dbReference type="PROSITE-ProRule" id="PRU01188"/>
    </source>
</evidence>
<evidence type="ECO:0000269" key="2">
    <source>
    </source>
</evidence>
<evidence type="ECO:0000305" key="3"/>
<feature type="chain" id="PRO_0000063706" description="Keratin, type I microfibrillar 48 kDa, component 8C-1">
    <location>
        <begin position="1"/>
        <end position="412"/>
    </location>
</feature>
<feature type="domain" description="IF rod" evidence="1">
    <location>
        <begin position="55"/>
        <end position="366"/>
    </location>
</feature>
<feature type="region of interest" description="Head">
    <location>
        <begin position="1"/>
        <end position="55"/>
    </location>
</feature>
<feature type="region of interest" description="Coil 1A">
    <location>
        <begin position="56"/>
        <end position="90"/>
    </location>
</feature>
<feature type="region of interest" description="Linker 1">
    <location>
        <begin position="91"/>
        <end position="101"/>
    </location>
</feature>
<feature type="region of interest" description="Coil 1B">
    <location>
        <begin position="102"/>
        <end position="202"/>
    </location>
</feature>
<feature type="region of interest" description="Linker 12">
    <location>
        <begin position="203"/>
        <end position="218"/>
    </location>
</feature>
<feature type="region of interest" description="Coil 2">
    <location>
        <begin position="219"/>
        <end position="362"/>
    </location>
</feature>
<feature type="region of interest" description="Tail">
    <location>
        <begin position="363"/>
        <end position="412"/>
    </location>
</feature>
<feature type="site" description="Stutter">
    <location>
        <position position="304"/>
    </location>
</feature>
<feature type="modified residue" description="N-acetylserine" evidence="2">
    <location>
        <position position="1"/>
    </location>
</feature>
<feature type="sequence conflict" description="In Ref. 1; AA sequence." evidence="3" ref="1">
    <original>N</original>
    <variation>D</variation>
    <location>
        <position position="159"/>
    </location>
</feature>
<feature type="sequence conflict" description="In Ref. 3; AA sequence." evidence="3" ref="3">
    <original>SCQT</original>
    <variation>CNQE</variation>
    <location>
        <begin position="266"/>
        <end position="269"/>
    </location>
</feature>
<feature type="sequence conflict" description="In Ref. 1; AA sequence and 3; AA sequence." evidence="3" ref="1 3">
    <original>E</original>
    <variation>Q</variation>
    <location>
        <position position="282"/>
    </location>
</feature>
<proteinExistence type="evidence at protein level"/>
<comment type="function">
    <text>Wool microfibrillar keratin.</text>
</comment>
<comment type="miscellaneous">
    <text>There are two types of cytoskeletal and microfibrillar keratin: I (acidic; 40-55 kDa) and II (neutral to basic; 56-70 kDa).</text>
</comment>
<comment type="miscellaneous">
    <text>The low-sulfur proteins, derived from the microfibrillar fraction of wool extracts, are composed of two families, each consisting of 4 homologous subunits: the type I components (8C-1, 8C-2, 8A and 8B) and the type II components (5, 7A, 7B, and 7C).</text>
</comment>
<comment type="similarity">
    <text evidence="1">Belongs to the intermediate filament family.</text>
</comment>
<organism>
    <name type="scientific">Ovis aries</name>
    <name type="common">Sheep</name>
    <dbReference type="NCBI Taxonomy" id="9940"/>
    <lineage>
        <taxon>Eukaryota</taxon>
        <taxon>Metazoa</taxon>
        <taxon>Chordata</taxon>
        <taxon>Craniata</taxon>
        <taxon>Vertebrata</taxon>
        <taxon>Euteleostomi</taxon>
        <taxon>Mammalia</taxon>
        <taxon>Eutheria</taxon>
        <taxon>Laurasiatheria</taxon>
        <taxon>Artiodactyla</taxon>
        <taxon>Ruminantia</taxon>
        <taxon>Pecora</taxon>
        <taxon>Bovidae</taxon>
        <taxon>Caprinae</taxon>
        <taxon>Ovis</taxon>
    </lineage>
</organism>
<keyword id="KW-0007">Acetylation</keyword>
<keyword id="KW-0175">Coiled coil</keyword>
<keyword id="KW-0903">Direct protein sequencing</keyword>
<keyword id="KW-0403">Intermediate filament</keyword>
<keyword id="KW-0416">Keratin</keyword>
<keyword id="KW-1185">Reference proteome</keyword>